<reference key="1">
    <citation type="journal article" date="2000" name="Biochim. Biophys. Acta">
        <title>Candidate osmosensors from Candida utilis and Kluyveromyces lactis: structural and functional homology to the Sho1p putative osmosensor from Saccharomyces cerevisiae.</title>
        <authorList>
            <person name="Siderius M."/>
            <person name="Kolen C.P."/>
            <person name="van Heerikhuizen H."/>
            <person name="Mager W.H."/>
        </authorList>
    </citation>
    <scope>NUCLEOTIDE SEQUENCE [GENOMIC DNA]</scope>
    <scope>FUNCTION</scope>
</reference>
<reference key="2">
    <citation type="journal article" date="2004" name="Nature">
        <title>Genome evolution in yeasts.</title>
        <authorList>
            <person name="Dujon B."/>
            <person name="Sherman D."/>
            <person name="Fischer G."/>
            <person name="Durrens P."/>
            <person name="Casaregola S."/>
            <person name="Lafontaine I."/>
            <person name="de Montigny J."/>
            <person name="Marck C."/>
            <person name="Neuveglise C."/>
            <person name="Talla E."/>
            <person name="Goffard N."/>
            <person name="Frangeul L."/>
            <person name="Aigle M."/>
            <person name="Anthouard V."/>
            <person name="Babour A."/>
            <person name="Barbe V."/>
            <person name="Barnay S."/>
            <person name="Blanchin S."/>
            <person name="Beckerich J.-M."/>
            <person name="Beyne E."/>
            <person name="Bleykasten C."/>
            <person name="Boisrame A."/>
            <person name="Boyer J."/>
            <person name="Cattolico L."/>
            <person name="Confanioleri F."/>
            <person name="de Daruvar A."/>
            <person name="Despons L."/>
            <person name="Fabre E."/>
            <person name="Fairhead C."/>
            <person name="Ferry-Dumazet H."/>
            <person name="Groppi A."/>
            <person name="Hantraye F."/>
            <person name="Hennequin C."/>
            <person name="Jauniaux N."/>
            <person name="Joyet P."/>
            <person name="Kachouri R."/>
            <person name="Kerrest A."/>
            <person name="Koszul R."/>
            <person name="Lemaire M."/>
            <person name="Lesur I."/>
            <person name="Ma L."/>
            <person name="Muller H."/>
            <person name="Nicaud J.-M."/>
            <person name="Nikolski M."/>
            <person name="Oztas S."/>
            <person name="Ozier-Kalogeropoulos O."/>
            <person name="Pellenz S."/>
            <person name="Potier S."/>
            <person name="Richard G.-F."/>
            <person name="Straub M.-L."/>
            <person name="Suleau A."/>
            <person name="Swennen D."/>
            <person name="Tekaia F."/>
            <person name="Wesolowski-Louvel M."/>
            <person name="Westhof E."/>
            <person name="Wirth B."/>
            <person name="Zeniou-Meyer M."/>
            <person name="Zivanovic Y."/>
            <person name="Bolotin-Fukuhara M."/>
            <person name="Thierry A."/>
            <person name="Bouchier C."/>
            <person name="Caudron B."/>
            <person name="Scarpelli C."/>
            <person name="Gaillardin C."/>
            <person name="Weissenbach J."/>
            <person name="Wincker P."/>
            <person name="Souciet J.-L."/>
        </authorList>
    </citation>
    <scope>NUCLEOTIDE SEQUENCE [LARGE SCALE GENOMIC DNA]</scope>
    <source>
        <strain>ATCC 8585 / CBS 2359 / DSM 70799 / NBRC 1267 / NRRL Y-1140 / WM37</strain>
    </source>
</reference>
<protein>
    <recommendedName>
        <fullName>High osmolarity signaling protein SHO1</fullName>
    </recommendedName>
    <alternativeName>
        <fullName>Osmosensor SHO1</fullName>
    </alternativeName>
</protein>
<feature type="chain" id="PRO_0000410378" description="High osmolarity signaling protein SHO1">
    <location>
        <begin position="1"/>
        <end position="357"/>
    </location>
</feature>
<feature type="topological domain" description="Cytoplasmic" evidence="2">
    <location>
        <begin position="1"/>
        <end position="31"/>
    </location>
</feature>
<feature type="transmembrane region" description="Helical" evidence="2">
    <location>
        <begin position="32"/>
        <end position="52"/>
    </location>
</feature>
<feature type="topological domain" description="Extracellular" evidence="2">
    <location>
        <begin position="53"/>
        <end position="63"/>
    </location>
</feature>
<feature type="transmembrane region" description="Helical" evidence="2">
    <location>
        <begin position="64"/>
        <end position="84"/>
    </location>
</feature>
<feature type="topological domain" description="Cytoplasmic" evidence="2">
    <location>
        <begin position="85"/>
        <end position="93"/>
    </location>
</feature>
<feature type="transmembrane region" description="Helical" evidence="2">
    <location>
        <begin position="94"/>
        <end position="114"/>
    </location>
</feature>
<feature type="topological domain" description="Extracellular" evidence="2">
    <location>
        <begin position="115"/>
        <end position="121"/>
    </location>
</feature>
<feature type="transmembrane region" description="Helical" evidence="2">
    <location>
        <begin position="122"/>
        <end position="142"/>
    </location>
</feature>
<feature type="topological domain" description="Cytoplasmic" evidence="2">
    <location>
        <begin position="143"/>
        <end position="357"/>
    </location>
</feature>
<feature type="domain" description="SH3" evidence="3">
    <location>
        <begin position="293"/>
        <end position="354"/>
    </location>
</feature>
<feature type="sequence conflict" description="In Ref. 1; CAB89868." evidence="5" ref="1">
    <original>SN</original>
    <variation>TI</variation>
    <location>
        <begin position="107"/>
        <end position="108"/>
    </location>
</feature>
<sequence length="357" mass="39322">MALIKASQARAVRENPHVSHQFNISSFLGDPFAIGTLSIALISWIIALAGSIAVAASTSPFPRFSWWTIVYEILLMITLFIVYCLDLVDYYRMFITCAVGIAFVYTSNSTNSIVYYEGSKSGAAAAGFILLSMINLVWVIYFGGDNASPTNRWIDSFSLRGIRPSVLETSMAIARSQRLPVKPSYPYQYQEDLRSASLPDVHHDDEGEGHSGNMYAPELQSSTKYVSSTVLNGFENTDHSSSKPNLDVNAQNTATLNTQATGTFITDTTNANTDTTMGDTLGLYSDIGEELNSFPYTAEALYTYQADQTDAYEISFEQGEILRVGDIEGRWWKAKKSNGETGIIPSNYVKLLDGKSH</sequence>
<proteinExistence type="inferred from homology"/>
<gene>
    <name type="primary">SHO1</name>
    <name type="ordered locus">KLLA0E06953g</name>
</gene>
<accession>Q6CP77</accession>
<accession>Q9P863</accession>
<comment type="function">
    <text evidence="4">Plasma membrane osmosensor that activates the high osmolarity glycerol (HOG) MAPK signaling pathway in response to high osmolarity.</text>
</comment>
<comment type="subunit">
    <text evidence="1">Forms homooligomers.</text>
</comment>
<comment type="subcellular location">
    <subcellularLocation>
        <location evidence="1">Cell membrane</location>
        <topology evidence="1">Multi-pass membrane protein</topology>
    </subcellularLocation>
</comment>
<comment type="similarity">
    <text evidence="5">Belongs to the SHO1 family.</text>
</comment>
<keyword id="KW-1003">Cell membrane</keyword>
<keyword id="KW-0472">Membrane</keyword>
<keyword id="KW-1185">Reference proteome</keyword>
<keyword id="KW-0728">SH3 domain</keyword>
<keyword id="KW-0346">Stress response</keyword>
<keyword id="KW-0812">Transmembrane</keyword>
<keyword id="KW-1133">Transmembrane helix</keyword>
<organism>
    <name type="scientific">Kluyveromyces lactis (strain ATCC 8585 / CBS 2359 / DSM 70799 / NBRC 1267 / NRRL Y-1140 / WM37)</name>
    <name type="common">Yeast</name>
    <name type="synonym">Candida sphaerica</name>
    <dbReference type="NCBI Taxonomy" id="284590"/>
    <lineage>
        <taxon>Eukaryota</taxon>
        <taxon>Fungi</taxon>
        <taxon>Dikarya</taxon>
        <taxon>Ascomycota</taxon>
        <taxon>Saccharomycotina</taxon>
        <taxon>Saccharomycetes</taxon>
        <taxon>Saccharomycetales</taxon>
        <taxon>Saccharomycetaceae</taxon>
        <taxon>Kluyveromyces</taxon>
    </lineage>
</organism>
<name>SHO1_KLULA</name>
<evidence type="ECO:0000250" key="1"/>
<evidence type="ECO:0000255" key="2"/>
<evidence type="ECO:0000255" key="3">
    <source>
        <dbReference type="PROSITE-ProRule" id="PRU00192"/>
    </source>
</evidence>
<evidence type="ECO:0000269" key="4">
    <source>
    </source>
</evidence>
<evidence type="ECO:0000305" key="5"/>
<dbReference type="EMBL" id="AJ277719">
    <property type="protein sequence ID" value="CAB89868.1"/>
    <property type="molecule type" value="Genomic_DNA"/>
</dbReference>
<dbReference type="EMBL" id="CR382125">
    <property type="protein sequence ID" value="CAG99349.1"/>
    <property type="molecule type" value="Genomic_DNA"/>
</dbReference>
<dbReference type="RefSeq" id="XP_454262.1">
    <property type="nucleotide sequence ID" value="XM_454262.1"/>
</dbReference>
<dbReference type="SMR" id="Q6CP77"/>
<dbReference type="FunCoup" id="Q6CP77">
    <property type="interactions" value="216"/>
</dbReference>
<dbReference type="STRING" id="284590.Q6CP77"/>
<dbReference type="PaxDb" id="284590-Q6CP77"/>
<dbReference type="KEGG" id="kla:KLLA0_E06953g"/>
<dbReference type="eggNOG" id="ENOG502QW7A">
    <property type="taxonomic scope" value="Eukaryota"/>
</dbReference>
<dbReference type="HOGENOM" id="CLU_043316_0_0_1"/>
<dbReference type="InParanoid" id="Q6CP77"/>
<dbReference type="OMA" id="KNGKWWQ"/>
<dbReference type="Proteomes" id="UP000000598">
    <property type="component" value="Chromosome E"/>
</dbReference>
<dbReference type="GO" id="GO:0005886">
    <property type="term" value="C:plasma membrane"/>
    <property type="evidence" value="ECO:0007669"/>
    <property type="project" value="UniProtKB-SubCell"/>
</dbReference>
<dbReference type="GO" id="GO:0030833">
    <property type="term" value="P:regulation of actin filament polymerization"/>
    <property type="evidence" value="ECO:0007669"/>
    <property type="project" value="TreeGrafter"/>
</dbReference>
<dbReference type="CDD" id="cd11855">
    <property type="entry name" value="SH3_Sho1p"/>
    <property type="match status" value="1"/>
</dbReference>
<dbReference type="FunFam" id="2.30.30.40:FF:000213">
    <property type="entry name" value="High osmolarity signaling protein SHO1"/>
    <property type="match status" value="1"/>
</dbReference>
<dbReference type="Gene3D" id="2.30.30.40">
    <property type="entry name" value="SH3 Domains"/>
    <property type="match status" value="1"/>
</dbReference>
<dbReference type="InterPro" id="IPR036028">
    <property type="entry name" value="SH3-like_dom_sf"/>
</dbReference>
<dbReference type="InterPro" id="IPR001452">
    <property type="entry name" value="SH3_domain"/>
</dbReference>
<dbReference type="InterPro" id="IPR035522">
    <property type="entry name" value="Sho1_SH3"/>
</dbReference>
<dbReference type="PANTHER" id="PTHR15735">
    <property type="entry name" value="FCH AND DOUBLE SH3 DOMAINS PROTEIN"/>
    <property type="match status" value="1"/>
</dbReference>
<dbReference type="PANTHER" id="PTHR15735:SF20">
    <property type="entry name" value="HIGH OSMOLARITY SIGNALING PROTEIN SHO1"/>
    <property type="match status" value="1"/>
</dbReference>
<dbReference type="Pfam" id="PF00018">
    <property type="entry name" value="SH3_1"/>
    <property type="match status" value="1"/>
</dbReference>
<dbReference type="PRINTS" id="PR00452">
    <property type="entry name" value="SH3DOMAIN"/>
</dbReference>
<dbReference type="SMART" id="SM00326">
    <property type="entry name" value="SH3"/>
    <property type="match status" value="1"/>
</dbReference>
<dbReference type="SUPFAM" id="SSF50044">
    <property type="entry name" value="SH3-domain"/>
    <property type="match status" value="1"/>
</dbReference>
<dbReference type="PROSITE" id="PS50002">
    <property type="entry name" value="SH3"/>
    <property type="match status" value="1"/>
</dbReference>